<evidence type="ECO:0000250" key="1">
    <source>
        <dbReference type="UniProtKB" id="P03533"/>
    </source>
</evidence>
<evidence type="ECO:0000250" key="2">
    <source>
        <dbReference type="UniProtKB" id="P12476"/>
    </source>
</evidence>
<evidence type="ECO:0000255" key="3">
    <source>
        <dbReference type="HAMAP-Rule" id="MF_04131"/>
    </source>
</evidence>
<evidence type="ECO:0000269" key="4">
    <source>
    </source>
</evidence>
<evidence type="ECO:0000269" key="5">
    <source>
    </source>
</evidence>
<evidence type="ECO:0000269" key="6">
    <source>
    </source>
</evidence>
<evidence type="ECO:0000269" key="7">
    <source>
    </source>
</evidence>
<evidence type="ECO:0000269" key="8">
    <source>
    </source>
</evidence>
<evidence type="ECO:0000303" key="9">
    <source>
    </source>
</evidence>
<evidence type="ECO:0000305" key="10"/>
<evidence type="ECO:0000305" key="11">
    <source>
    </source>
</evidence>
<keyword id="KW-0024">Alternative initiation</keyword>
<keyword id="KW-0106">Calcium</keyword>
<keyword id="KW-0167">Capsid protein</keyword>
<keyword id="KW-1015">Disulfide bond</keyword>
<keyword id="KW-0325">Glycoprotein</keyword>
<keyword id="KW-1038">Host endoplasmic reticulum</keyword>
<keyword id="KW-0945">Host-virus interaction</keyword>
<keyword id="KW-0479">Metal-binding</keyword>
<keyword id="KW-1152">Outer capsid protein</keyword>
<keyword id="KW-1185">Reference proteome</keyword>
<keyword id="KW-0732">Signal</keyword>
<keyword id="KW-1146">T=13 icosahedral capsid protein</keyword>
<keyword id="KW-0946">Virion</keyword>
<feature type="signal peptide" evidence="3">
    <location>
        <begin position="1"/>
        <end position="50"/>
    </location>
</feature>
<feature type="chain" id="PRO_0000369103" description="Outer capsid glycoprotein VP7" evidence="3">
    <location>
        <begin position="51"/>
        <end position="326"/>
    </location>
</feature>
<feature type="region of interest" description="CNP motif; interaction with ITGAV/ITGB3" evidence="3">
    <location>
        <begin position="165"/>
        <end position="167"/>
    </location>
</feature>
<feature type="region of interest" description="LVD motif; interaction with ITGA4/ITGB1 heterodimer" evidence="3 8">
    <location>
        <begin position="237"/>
        <end position="239"/>
    </location>
</feature>
<feature type="region of interest" description="GPR motif; interaction with ITGAX/ITGB2" evidence="3 8">
    <location>
        <begin position="253"/>
        <end position="255"/>
    </location>
</feature>
<feature type="binding site" evidence="3">
    <location>
        <position position="95"/>
    </location>
    <ligand>
        <name>Ca(2+)</name>
        <dbReference type="ChEBI" id="CHEBI:29108"/>
        <label>1</label>
    </ligand>
</feature>
<feature type="binding site" evidence="3">
    <location>
        <position position="177"/>
    </location>
    <ligand>
        <name>Ca(2+)</name>
        <dbReference type="ChEBI" id="CHEBI:29108"/>
        <label>2</label>
    </ligand>
</feature>
<feature type="binding site" evidence="3">
    <location>
        <position position="206"/>
    </location>
    <ligand>
        <name>Ca(2+)</name>
        <dbReference type="ChEBI" id="CHEBI:29108"/>
        <label>1</label>
    </ligand>
</feature>
<feature type="binding site" evidence="3">
    <location>
        <position position="214"/>
    </location>
    <ligand>
        <name>Ca(2+)</name>
        <dbReference type="ChEBI" id="CHEBI:29108"/>
        <label>1</label>
    </ligand>
</feature>
<feature type="binding site" evidence="3">
    <location>
        <position position="216"/>
    </location>
    <ligand>
        <name>Ca(2+)</name>
        <dbReference type="ChEBI" id="CHEBI:29108"/>
        <label>1</label>
    </ligand>
</feature>
<feature type="binding site" evidence="3">
    <location>
        <position position="228"/>
    </location>
    <ligand>
        <name>Ca(2+)</name>
        <dbReference type="ChEBI" id="CHEBI:29108"/>
        <label>2</label>
    </ligand>
</feature>
<feature type="binding site" evidence="3">
    <location>
        <position position="229"/>
    </location>
    <ligand>
        <name>Ca(2+)</name>
        <dbReference type="ChEBI" id="CHEBI:29108"/>
        <label>2</label>
    </ligand>
</feature>
<feature type="binding site" evidence="3">
    <location>
        <position position="231"/>
    </location>
    <ligand>
        <name>Ca(2+)</name>
        <dbReference type="ChEBI" id="CHEBI:29108"/>
        <label>2</label>
    </ligand>
</feature>
<feature type="binding site" evidence="3">
    <location>
        <position position="301"/>
    </location>
    <ligand>
        <name>Ca(2+)</name>
        <dbReference type="ChEBI" id="CHEBI:29108"/>
        <label>2</label>
    </ligand>
</feature>
<feature type="glycosylation site" description="N-linked (GlcNAc...) asparagine; by host" evidence="2">
    <location>
        <position position="69"/>
    </location>
</feature>
<feature type="disulfide bond" evidence="3">
    <location>
        <begin position="82"/>
        <end position="135"/>
    </location>
</feature>
<feature type="disulfide bond" evidence="3">
    <location>
        <begin position="165"/>
        <end position="249"/>
    </location>
</feature>
<feature type="disulfide bond" evidence="3">
    <location>
        <begin position="191"/>
        <end position="244"/>
    </location>
</feature>
<feature type="disulfide bond" evidence="3">
    <location>
        <begin position="196"/>
        <end position="207"/>
    </location>
</feature>
<feature type="splice variant" id="VSP_038601" description="In isoform 2." evidence="10">
    <location>
        <begin position="1"/>
        <end position="29"/>
    </location>
</feature>
<reference key="1">
    <citation type="journal article" date="2007" name="Virology">
        <title>Genome heterogeneity of SA11 rotavirus due to reassortment with 'O' agent.</title>
        <authorList>
            <person name="Small C."/>
            <person name="Barro M."/>
            <person name="Brown T.L."/>
            <person name="Patton J.T."/>
        </authorList>
    </citation>
    <scope>NUCLEOTIDE SEQUENCE [GENOMIC RNA]</scope>
</reference>
<reference key="2">
    <citation type="journal article" date="1991" name="J. Virol.">
        <title>Rotavirus spike structure and polypeptide composition.</title>
        <authorList>
            <person name="Anthony I.D."/>
            <person name="Bullivant S."/>
            <person name="Dayal S."/>
            <person name="Bellamy A.R."/>
            <person name="Berriman J.A."/>
        </authorList>
    </citation>
    <scope>SUBCELLULAR LOCATION</scope>
</reference>
<reference key="3">
    <citation type="journal article" date="1997" name="Proc. Natl. Acad. Sci. U.S.A.">
        <title>Rotavirus contains integrin ligand sequences and a disintegrin-like domain that are implicated in virus entry into cells.</title>
        <authorList>
            <person name="Coulson B.S."/>
            <person name="Londrigan S.L."/>
            <person name="Lee D.J."/>
        </authorList>
    </citation>
    <scope>FUNCTION</scope>
    <scope>INTERACTION WITH INTEGRIN HETERODIMER ITGA4/ITGB1</scope>
    <scope>INTERACTION WITH INTEGRIN HETERODIMER ITGAX/ITGB2</scope>
</reference>
<reference key="4">
    <citation type="journal article" date="2000" name="J. Virol.">
        <title>Integrins alpha2beta1 and alpha4beta1 can mediate SA11 rotavirus attachment and entry into cells.</title>
        <authorList>
            <person name="Hewish M.J."/>
            <person name="Takada Y."/>
            <person name="Coulson B.S."/>
        </authorList>
    </citation>
    <scope>FUNCTION</scope>
    <scope>INTERACTION WITH INTEGRIN HETERODIMER ITGA4/ITGB1</scope>
    <scope>INTERACTION WITH INTEGRIN HETERODIMER ITGA2/ITGB1</scope>
</reference>
<reference key="5">
    <citation type="journal article" date="2004" name="Trends Microbiol.">
        <title>Multistep entry of rotavirus into cells: a Versaillesque dance.</title>
        <authorList>
            <person name="Lopez S."/>
            <person name="Arias C.F."/>
        </authorList>
    </citation>
    <scope>REVIEW</scope>
</reference>
<reference key="6">
    <citation type="journal article" date="2009" name="J. Virol.">
        <title>Rotavirus architecture at subnanometer resolution.</title>
        <authorList>
            <person name="Li Z."/>
            <person name="Baker M.L."/>
            <person name="Jiang W."/>
            <person name="Estes M.K."/>
            <person name="Prasad B.V.V."/>
        </authorList>
    </citation>
    <scope>STRUCTURE BY ELECTRON MICROSCOPY OF CAPSID SHELL</scope>
    <scope>INTERACTION WITH THE INTERMEDIATE PROTEIN VP6</scope>
    <scope>SUBCELLULAR LOCATION</scope>
    <source>
        <strain>SA11-4F</strain>
    </source>
</reference>
<accession>A2T3P5</accession>
<sequence>MYGIEYTTVLTFLISIILLNYILKSLTRIMDFIIYRFLFIIVILSPFLRAQNYGINLPITGSMDTAYANSTQEETFLTSTLCLYYPTEAATEINDNSWKDTLSQLFLTKGWPTGSVYFKEYTNIASFSVDPQLYCDYNVVLMKYDATLQLDMSELADLILNEWLCNPMDITLYYYQQTDEANKWISMGSSCTIKVCPLNTQTLGIGCLTTDATTFEEVATAEKLVITDVVDGVNHKLDVTTATCTIRNCKKLGPRENVAVIQVGGSDILDITADPTTAPQTERMMRINWKKWWQVFYTVVDYVDQIIQVMSKRSRSLNSAAFYYRV</sequence>
<protein>
    <recommendedName>
        <fullName evidence="3">Outer capsid glycoprotein VP7</fullName>
    </recommendedName>
</protein>
<dbReference type="EMBL" id="DQ838620">
    <property type="protein sequence ID" value="ABG75794.1"/>
    <property type="molecule type" value="Genomic_RNA"/>
</dbReference>
<dbReference type="RefSeq" id="YP_002302222.1">
    <property type="nucleotide sequence ID" value="NC_011503.2"/>
</dbReference>
<dbReference type="SMR" id="A2T3P5"/>
<dbReference type="GeneID" id="7011359"/>
<dbReference type="KEGG" id="vg:7011359"/>
<dbReference type="Proteomes" id="UP000001119">
    <property type="component" value="Genome"/>
</dbReference>
<dbReference type="GO" id="GO:0044166">
    <property type="term" value="C:host cell endoplasmic reticulum lumen"/>
    <property type="evidence" value="ECO:0007669"/>
    <property type="project" value="UniProtKB-SubCell"/>
</dbReference>
<dbReference type="GO" id="GO:0039621">
    <property type="term" value="C:T=13 icosahedral viral capsid"/>
    <property type="evidence" value="ECO:0000314"/>
    <property type="project" value="UniProtKB"/>
</dbReference>
<dbReference type="GO" id="GO:0039624">
    <property type="term" value="C:viral outer capsid"/>
    <property type="evidence" value="ECO:0000314"/>
    <property type="project" value="UniProtKB"/>
</dbReference>
<dbReference type="GO" id="GO:0046872">
    <property type="term" value="F:metal ion binding"/>
    <property type="evidence" value="ECO:0007669"/>
    <property type="project" value="UniProtKB-KW"/>
</dbReference>
<dbReference type="GO" id="GO:0046813">
    <property type="term" value="P:receptor-mediated virion attachment to host cell"/>
    <property type="evidence" value="ECO:0000314"/>
    <property type="project" value="UniProtKB"/>
</dbReference>
<dbReference type="FunFam" id="2.60.120.800:FF:000001">
    <property type="entry name" value="Outer capsid glycoprotein VP7"/>
    <property type="match status" value="1"/>
</dbReference>
<dbReference type="Gene3D" id="3.40.50.11130">
    <property type="entry name" value="Glycoprotein VP7, domain 1"/>
    <property type="match status" value="1"/>
</dbReference>
<dbReference type="Gene3D" id="2.60.120.800">
    <property type="entry name" value="Rotavirus outer-layer protein VP7, domain 2"/>
    <property type="match status" value="1"/>
</dbReference>
<dbReference type="HAMAP" id="MF_04130">
    <property type="entry name" value="Rota_VP7"/>
    <property type="match status" value="1"/>
</dbReference>
<dbReference type="HAMAP" id="MF_04131">
    <property type="entry name" value="Rota_VP7_A"/>
    <property type="match status" value="1"/>
</dbReference>
<dbReference type="InterPro" id="IPR001963">
    <property type="entry name" value="VP7"/>
</dbReference>
<dbReference type="InterPro" id="IPR042207">
    <property type="entry name" value="VP7_1"/>
</dbReference>
<dbReference type="InterPro" id="IPR042210">
    <property type="entry name" value="VP7_2"/>
</dbReference>
<dbReference type="Pfam" id="PF00434">
    <property type="entry name" value="VP7"/>
    <property type="match status" value="1"/>
</dbReference>
<comment type="function">
    <text evidence="3 4 8 9">Calcium-binding protein that interacts with rotavirus cell receptors once the initial attachment by VP4 has been achieved. Rotavirus attachment and entry into the host cell probably involves multiple sequential contacts between the outer capsid proteins VP4 and VP7, and the cell receptors (PubMed:10590110, PubMed:9144247). Following entry into the host cell, low intracellular or intravesicular Ca(2+) concentration probably causes the calcium-stabilized VP7 trimers to dissociate from the virion. This step is probably necessary for the membrane-disrupting entry step and the release of VP4, which is locked onto the virion by VP7 (By similarity).</text>
</comment>
<comment type="subunit">
    <text evidence="3 4 7 11">Homotrimer; disulfide-linked (By similarity). 2 Ca(2+) ions bound at each subunit interface in the trimer hold the trimer together (By similarity). Interacts with the intermediate capsid protein VP6 (PubMed:19036817). Interacts with the outer capsid protein VP5* (By similarity). Interacts with host integrin heterodimer ITGAX/ITGB2 (PubMed:9144247). Interacts with host integrin heterodimer ITGA4/ITGB1 (PubMed:10590110, PubMed:9144247). Interacts with host integrin heterodimer ITGA2/ITGB1 (PubMed:10590110).</text>
</comment>
<comment type="subcellular location">
    <subcellularLocation>
        <location evidence="3 6 7">Virion</location>
    </subcellularLocation>
    <subcellularLocation>
        <location evidence="3">Host endoplasmic reticulum lumen</location>
    </subcellularLocation>
    <text evidence="3">The outer layer contains 780 copies of VP7, grouped as 260 trimers. Immature double-layered particles assembled in the cytoplasm bud across the membrane of the endoplasmic reticulum, acquiring during this process a transient lipid membrane that is modified with the ER resident viral glycoproteins NSP4 and VP7; these enveloped particles also contain VP4. As the particles move towards the interior of the ER cisternae, the transient lipid membrane and the non-structural protein NSP4 are lost, while the virus surface proteins VP4 and VP7 rearrange to form the outermost virus protein layer, yielding mature infectious triple-layered particles.</text>
</comment>
<comment type="alternative products">
    <event type="alternative initiation"/>
    <isoform>
        <id>A2T3P5-1</id>
        <name>1</name>
        <sequence type="displayed"/>
    </isoform>
    <isoform>
        <id>A2T3P5-2</id>
        <name>2</name>
        <sequence type="described" ref="VSP_038601"/>
    </isoform>
</comment>
<comment type="PTM">
    <text evidence="3">N-glycosylated.</text>
</comment>
<comment type="PTM">
    <text evidence="3">The N-terminus is blocked possibly by pyroglutamic acid.</text>
</comment>
<comment type="miscellaneous">
    <text evidence="3 5">Some rotavirus strains are neuraminidase-sensitive and require sialic acid to attach to the cell surface. Some rotavirus strains are integrin-dependent. Some rotavirus strains depend on ganglioside for their entry into the host cell. Hsp70 also seems to be involved in the entry of some strains.</text>
</comment>
<comment type="miscellaneous">
    <text evidence="3">In group A rotaviruses, VP7 defines the G serotype.</text>
</comment>
<comment type="miscellaneous">
    <molecule>Isoform 2</molecule>
    <text evidence="1">Produced by alternative initiation at Met-30 of isoform 1.</text>
</comment>
<comment type="similarity">
    <text evidence="3">Belongs to the rotavirus VP7 family.</text>
</comment>
<name>VP7_ROTSH</name>
<organism>
    <name type="scientific">Rotavirus A (isolate RVA/Monkey/South Africa/SA11-H96/1958/G3P5B[2])</name>
    <name type="common">RV-A</name>
    <name type="synonym">Simian Agent 11 (isolate SI/South Africa/H96/58)</name>
    <dbReference type="NCBI Taxonomy" id="450149"/>
    <lineage>
        <taxon>Viruses</taxon>
        <taxon>Riboviria</taxon>
        <taxon>Orthornavirae</taxon>
        <taxon>Duplornaviricota</taxon>
        <taxon>Resentoviricetes</taxon>
        <taxon>Reovirales</taxon>
        <taxon>Sedoreoviridae</taxon>
        <taxon>Rotavirus</taxon>
        <taxon>Rotavirus A</taxon>
    </lineage>
</organism>
<organismHost>
    <name type="scientific">Chlorocebus pygerythrus</name>
    <name type="common">Vervet monkey</name>
    <name type="synonym">Cercopithecus pygerythrus</name>
    <dbReference type="NCBI Taxonomy" id="60710"/>
</organismHost>
<proteinExistence type="evidence at protein level"/>